<accession>P59211</accession>
<keyword id="KW-0963">Cytoplasm</keyword>
<proteinExistence type="inferred from homology"/>
<reference key="1">
    <citation type="journal article" date="2000" name="J. Bacteriol.">
        <title>Transcriptional and mutational analyses of the Streptomyces lividans recX gene and its interference with RecA activity.</title>
        <authorList>
            <person name="Vierling S."/>
            <person name="Weber T."/>
            <person name="Wohlleben W."/>
            <person name="Muth G."/>
        </authorList>
    </citation>
    <scope>NUCLEOTIDE SEQUENCE [GENOMIC DNA]</scope>
    <source>
        <strain>TK64</strain>
    </source>
</reference>
<protein>
    <recommendedName>
        <fullName>Regulatory protein RecX</fullName>
    </recommendedName>
</protein>
<sequence>MEPSAEDGGATSSSRAEKGEPPRDPVEQARAICLRLLTGTPRTRRQLADALRKREIPEEAAEEVLSRFEEVGLINDGAFAQAWVESRHHGRGLARRALARELRTKGVEAALIDVAVSQLDTEQEEETARDLVARKLRATRGLDRDKRLRRLAGMLARKGYSEGMALRVVRQALEEEGEDTEHLGDEGF</sequence>
<feature type="chain" id="PRO_0000162480" description="Regulatory protein RecX">
    <location>
        <begin position="1"/>
        <end position="188"/>
    </location>
</feature>
<feature type="region of interest" description="Disordered" evidence="2">
    <location>
        <begin position="1"/>
        <end position="28"/>
    </location>
</feature>
<feature type="compositionally biased region" description="Basic and acidic residues" evidence="2">
    <location>
        <begin position="15"/>
        <end position="27"/>
    </location>
</feature>
<name>RECX_STRLI</name>
<organism>
    <name type="scientific">Streptomyces lividans</name>
    <dbReference type="NCBI Taxonomy" id="1916"/>
    <lineage>
        <taxon>Bacteria</taxon>
        <taxon>Bacillati</taxon>
        <taxon>Actinomycetota</taxon>
        <taxon>Actinomycetes</taxon>
        <taxon>Kitasatosporales</taxon>
        <taxon>Streptomycetaceae</taxon>
        <taxon>Streptomyces</taxon>
    </lineage>
</organism>
<gene>
    <name type="primary">recX</name>
</gene>
<comment type="function">
    <text evidence="1">Modulates RecA activity.</text>
</comment>
<comment type="subcellular location">
    <subcellularLocation>
        <location evidence="3">Cytoplasm</location>
    </subcellularLocation>
</comment>
<comment type="similarity">
    <text evidence="3">Belongs to the RecX family.</text>
</comment>
<evidence type="ECO:0000250" key="1"/>
<evidence type="ECO:0000256" key="2">
    <source>
        <dbReference type="SAM" id="MobiDB-lite"/>
    </source>
</evidence>
<evidence type="ECO:0000305" key="3"/>
<dbReference type="EMBL" id="AJ496455">
    <property type="protein sequence ID" value="CAD42964.1"/>
    <property type="molecule type" value="Genomic_DNA"/>
</dbReference>
<dbReference type="SMR" id="P59211"/>
<dbReference type="GO" id="GO:0005737">
    <property type="term" value="C:cytoplasm"/>
    <property type="evidence" value="ECO:0007669"/>
    <property type="project" value="UniProtKB-SubCell"/>
</dbReference>
<dbReference type="GO" id="GO:0006282">
    <property type="term" value="P:regulation of DNA repair"/>
    <property type="evidence" value="ECO:0007669"/>
    <property type="project" value="UniProtKB-UniRule"/>
</dbReference>
<dbReference type="Gene3D" id="1.10.10.10">
    <property type="entry name" value="Winged helix-like DNA-binding domain superfamily/Winged helix DNA-binding domain"/>
    <property type="match status" value="2"/>
</dbReference>
<dbReference type="HAMAP" id="MF_01114">
    <property type="entry name" value="RecX"/>
    <property type="match status" value="1"/>
</dbReference>
<dbReference type="InterPro" id="IPR053926">
    <property type="entry name" value="RecX_HTH_1st"/>
</dbReference>
<dbReference type="InterPro" id="IPR053924">
    <property type="entry name" value="RecX_HTH_2nd"/>
</dbReference>
<dbReference type="InterPro" id="IPR053925">
    <property type="entry name" value="RecX_HTH_3rd"/>
</dbReference>
<dbReference type="InterPro" id="IPR003783">
    <property type="entry name" value="Regulatory_RecX"/>
</dbReference>
<dbReference type="InterPro" id="IPR036388">
    <property type="entry name" value="WH-like_DNA-bd_sf"/>
</dbReference>
<dbReference type="NCBIfam" id="NF001061">
    <property type="entry name" value="PRK00117.5-1"/>
    <property type="match status" value="1"/>
</dbReference>
<dbReference type="PANTHER" id="PTHR33602">
    <property type="entry name" value="REGULATORY PROTEIN RECX FAMILY PROTEIN"/>
    <property type="match status" value="1"/>
</dbReference>
<dbReference type="PANTHER" id="PTHR33602:SF1">
    <property type="entry name" value="REGULATORY PROTEIN RECX FAMILY PROTEIN"/>
    <property type="match status" value="1"/>
</dbReference>
<dbReference type="Pfam" id="PF21982">
    <property type="entry name" value="RecX_HTH1"/>
    <property type="match status" value="1"/>
</dbReference>
<dbReference type="Pfam" id="PF02631">
    <property type="entry name" value="RecX_HTH2"/>
    <property type="match status" value="1"/>
</dbReference>
<dbReference type="Pfam" id="PF21981">
    <property type="entry name" value="RecX_HTH3"/>
    <property type="match status" value="1"/>
</dbReference>